<gene>
    <name type="ORF">98</name>
</gene>
<proteinExistence type="predicted"/>
<sequence length="98" mass="10636">MAITLLEGALYGFFAVTGVLIASFIIGEIVHLYNEKQSNENFAKAIDQMSKSTVTAIESIKDTTVTGINALLNMDTLRDVNSLAREKAKDQNPSSQAK</sequence>
<dbReference type="EMBL" id="AJ414696">
    <property type="protein sequence ID" value="CAC93997.1"/>
    <property type="molecule type" value="Genomic_DNA"/>
</dbReference>
<dbReference type="EMBL" id="AJ748296">
    <property type="protein sequence ID" value="CAG38861.1"/>
    <property type="molecule type" value="Genomic_DNA"/>
</dbReference>
<dbReference type="RefSeq" id="NP_666630.1">
    <property type="nucleotide sequence ID" value="NC_004087.1"/>
</dbReference>
<dbReference type="SMR" id="Q8QL14"/>
<dbReference type="KEGG" id="vg:951360"/>
<dbReference type="OrthoDB" id="19816at10239"/>
<dbReference type="Proteomes" id="UP000002270">
    <property type="component" value="Genome"/>
</dbReference>
<dbReference type="Proteomes" id="UP000223181">
    <property type="component" value="Segment"/>
</dbReference>
<dbReference type="GO" id="GO:0033644">
    <property type="term" value="C:host cell membrane"/>
    <property type="evidence" value="ECO:0007669"/>
    <property type="project" value="UniProtKB-SubCell"/>
</dbReference>
<dbReference type="GO" id="GO:0016020">
    <property type="term" value="C:membrane"/>
    <property type="evidence" value="ECO:0007669"/>
    <property type="project" value="UniProtKB-KW"/>
</dbReference>
<reference key="1">
    <citation type="journal article" date="2001" name="Virology">
        <title>Sequences and replication of genomes of the archaeal rudiviruses SIRV1 and SIRV2: relationships to the archaeal lipothrixvirus SIFV and some eukaryal viruses.</title>
        <authorList>
            <person name="Peng X."/>
            <person name="Blum H."/>
            <person name="She Q."/>
            <person name="Mallok S."/>
            <person name="Bruegger K."/>
            <person name="Garrett R.A."/>
            <person name="Zillig W."/>
            <person name="Prangishvili D."/>
        </authorList>
    </citation>
    <scope>NUCLEOTIDE SEQUENCE [LARGE SCALE GENOMIC DNA]</scope>
    <source>
        <strain>Isolate variant VIII</strain>
    </source>
</reference>
<reference key="2">
    <citation type="journal article" date="2004" name="Mol. Microbiol.">
        <title>Multiple variants of the archaeal DNA rudivirus SIRV1 in a single host and a novel mechanism of genomic variation.</title>
        <authorList>
            <person name="Peng X."/>
            <person name="Kessler A."/>
            <person name="Phan H."/>
            <person name="Garrett R.A."/>
            <person name="Prangishvili D."/>
        </authorList>
    </citation>
    <scope>NUCLEOTIDE SEQUENCE [LARGE SCALE GENOMIC DNA]</scope>
    <source>
        <strain>Isolate variant XX</strain>
    </source>
</reference>
<comment type="subcellular location">
    <subcellularLocation>
        <location evidence="2">Host membrane</location>
        <topology evidence="2">Single-pass membrane protein</topology>
    </subcellularLocation>
</comment>
<name>Y98_SIRV1</name>
<feature type="chain" id="PRO_0000342294" description="Uncharacterized protein 98">
    <location>
        <begin position="1"/>
        <end position="98"/>
    </location>
</feature>
<feature type="transmembrane region" description="Helical" evidence="1">
    <location>
        <begin position="10"/>
        <end position="30"/>
    </location>
</feature>
<feature type="sequence variant" description="In strain: Isolate variant XX.">
    <original>V</original>
    <variation>I</variation>
    <location>
        <position position="19"/>
    </location>
</feature>
<feature type="sequence variant" description="In strain: Isolate variant XX.">
    <original>A</original>
    <variation>G</variation>
    <location>
        <position position="22"/>
    </location>
</feature>
<feature type="sequence variant" description="In strain: Isolate variant XX.">
    <original>II</original>
    <variation>VV</variation>
    <location>
        <begin position="25"/>
        <end position="26"/>
    </location>
</feature>
<feature type="sequence variant" description="In strain: Isolate variant XX.">
    <original>I</original>
    <variation>V</variation>
    <location>
        <position position="46"/>
    </location>
</feature>
<feature type="sequence variant" description="In strain: Isolate variant XX.">
    <original>S</original>
    <variation>T</variation>
    <location>
        <position position="50"/>
    </location>
</feature>
<accession>Q8QL14</accession>
<accession>Q5TJ77</accession>
<organismHost>
    <name type="scientific">Saccharolobus islandicus</name>
    <name type="common">Sulfolobus islandicus</name>
    <dbReference type="NCBI Taxonomy" id="43080"/>
</organismHost>
<keyword id="KW-1043">Host membrane</keyword>
<keyword id="KW-0472">Membrane</keyword>
<keyword id="KW-1185">Reference proteome</keyword>
<keyword id="KW-0812">Transmembrane</keyword>
<keyword id="KW-1133">Transmembrane helix</keyword>
<evidence type="ECO:0000255" key="1"/>
<evidence type="ECO:0000305" key="2"/>
<protein>
    <recommendedName>
        <fullName>Uncharacterized protein 98</fullName>
    </recommendedName>
</protein>
<organism>
    <name type="scientific">Sulfolobus islandicus rod-shaped virus 1</name>
    <name type="common">SIRV-1</name>
    <name type="synonym">Sulfolobus virus SIRV-1</name>
    <dbReference type="NCBI Taxonomy" id="157898"/>
    <lineage>
        <taxon>Viruses</taxon>
        <taxon>Adnaviria</taxon>
        <taxon>Zilligvirae</taxon>
        <taxon>Taleaviricota</taxon>
        <taxon>Tokiviricetes</taxon>
        <taxon>Ligamenvirales</taxon>
        <taxon>Rudiviridae</taxon>
        <taxon>Icerudivirus</taxon>
        <taxon>Icerudivirus SIRV1</taxon>
    </lineage>
</organism>